<dbReference type="EMBL" id="AC011665">
    <property type="status" value="NOT_ANNOTATED_CDS"/>
    <property type="molecule type" value="Genomic_DNA"/>
</dbReference>
<dbReference type="EMBL" id="CP002684">
    <property type="protein sequence ID" value="AEE34856.1"/>
    <property type="molecule type" value="Genomic_DNA"/>
</dbReference>
<dbReference type="RefSeq" id="NP_001031253.1">
    <property type="nucleotide sequence ID" value="NM_001036176.1"/>
</dbReference>
<dbReference type="SMR" id="Q2V4E0"/>
<dbReference type="PaxDb" id="3702-AT1G68905.1"/>
<dbReference type="ProteomicsDB" id="224136"/>
<dbReference type="EnsemblPlants" id="AT1G68905.1">
    <property type="protein sequence ID" value="AT1G68905.1"/>
    <property type="gene ID" value="AT1G68905"/>
</dbReference>
<dbReference type="GeneID" id="3767668"/>
<dbReference type="Gramene" id="AT1G68905.1">
    <property type="protein sequence ID" value="AT1G68905.1"/>
    <property type="gene ID" value="AT1G68905"/>
</dbReference>
<dbReference type="KEGG" id="ath:AT1G68905"/>
<dbReference type="Araport" id="AT1G68905"/>
<dbReference type="TAIR" id="AT1G68905"/>
<dbReference type="HOGENOM" id="CLU_2375699_0_0_1"/>
<dbReference type="InParanoid" id="Q2V4E0"/>
<dbReference type="OMA" id="CPRECEL"/>
<dbReference type="OrthoDB" id="1062545at2759"/>
<dbReference type="PhylomeDB" id="Q2V4E0"/>
<dbReference type="PRO" id="PR:Q2V4E0"/>
<dbReference type="Proteomes" id="UP000006548">
    <property type="component" value="Chromosome 1"/>
</dbReference>
<dbReference type="ExpressionAtlas" id="Q2V4E0">
    <property type="expression patterns" value="baseline and differential"/>
</dbReference>
<dbReference type="GO" id="GO:0005576">
    <property type="term" value="C:extracellular region"/>
    <property type="evidence" value="ECO:0007669"/>
    <property type="project" value="UniProtKB-SubCell"/>
</dbReference>
<dbReference type="GO" id="GO:0050832">
    <property type="term" value="P:defense response to fungus"/>
    <property type="evidence" value="ECO:0007669"/>
    <property type="project" value="UniProtKB-KW"/>
</dbReference>
<dbReference type="GO" id="GO:0031640">
    <property type="term" value="P:killing of cells of another organism"/>
    <property type="evidence" value="ECO:0007669"/>
    <property type="project" value="UniProtKB-KW"/>
</dbReference>
<reference key="1">
    <citation type="journal article" date="2000" name="Nature">
        <title>Sequence and analysis of chromosome 1 of the plant Arabidopsis thaliana.</title>
        <authorList>
            <person name="Theologis A."/>
            <person name="Ecker J.R."/>
            <person name="Palm C.J."/>
            <person name="Federspiel N.A."/>
            <person name="Kaul S."/>
            <person name="White O."/>
            <person name="Alonso J."/>
            <person name="Altafi H."/>
            <person name="Araujo R."/>
            <person name="Bowman C.L."/>
            <person name="Brooks S.Y."/>
            <person name="Buehler E."/>
            <person name="Chan A."/>
            <person name="Chao Q."/>
            <person name="Chen H."/>
            <person name="Cheuk R.F."/>
            <person name="Chin C.W."/>
            <person name="Chung M.K."/>
            <person name="Conn L."/>
            <person name="Conway A.B."/>
            <person name="Conway A.R."/>
            <person name="Creasy T.H."/>
            <person name="Dewar K."/>
            <person name="Dunn P."/>
            <person name="Etgu P."/>
            <person name="Feldblyum T.V."/>
            <person name="Feng J.-D."/>
            <person name="Fong B."/>
            <person name="Fujii C.Y."/>
            <person name="Gill J.E."/>
            <person name="Goldsmith A.D."/>
            <person name="Haas B."/>
            <person name="Hansen N.F."/>
            <person name="Hughes B."/>
            <person name="Huizar L."/>
            <person name="Hunter J.L."/>
            <person name="Jenkins J."/>
            <person name="Johnson-Hopson C."/>
            <person name="Khan S."/>
            <person name="Khaykin E."/>
            <person name="Kim C.J."/>
            <person name="Koo H.L."/>
            <person name="Kremenetskaia I."/>
            <person name="Kurtz D.B."/>
            <person name="Kwan A."/>
            <person name="Lam B."/>
            <person name="Langin-Hooper S."/>
            <person name="Lee A."/>
            <person name="Lee J.M."/>
            <person name="Lenz C.A."/>
            <person name="Li J.H."/>
            <person name="Li Y.-P."/>
            <person name="Lin X."/>
            <person name="Liu S.X."/>
            <person name="Liu Z.A."/>
            <person name="Luros J.S."/>
            <person name="Maiti R."/>
            <person name="Marziali A."/>
            <person name="Militscher J."/>
            <person name="Miranda M."/>
            <person name="Nguyen M."/>
            <person name="Nierman W.C."/>
            <person name="Osborne B.I."/>
            <person name="Pai G."/>
            <person name="Peterson J."/>
            <person name="Pham P.K."/>
            <person name="Rizzo M."/>
            <person name="Rooney T."/>
            <person name="Rowley D."/>
            <person name="Sakano H."/>
            <person name="Salzberg S.L."/>
            <person name="Schwartz J.R."/>
            <person name="Shinn P."/>
            <person name="Southwick A.M."/>
            <person name="Sun H."/>
            <person name="Tallon L.J."/>
            <person name="Tambunga G."/>
            <person name="Toriumi M.J."/>
            <person name="Town C.D."/>
            <person name="Utterback T."/>
            <person name="Van Aken S."/>
            <person name="Vaysberg M."/>
            <person name="Vysotskaia V.S."/>
            <person name="Walker M."/>
            <person name="Wu D."/>
            <person name="Yu G."/>
            <person name="Fraser C.M."/>
            <person name="Venter J.C."/>
            <person name="Davis R.W."/>
        </authorList>
    </citation>
    <scope>NUCLEOTIDE SEQUENCE [LARGE SCALE GENOMIC DNA]</scope>
    <source>
        <strain>cv. Columbia</strain>
    </source>
</reference>
<reference key="2">
    <citation type="journal article" date="2017" name="Plant J.">
        <title>Araport11: a complete reannotation of the Arabidopsis thaliana reference genome.</title>
        <authorList>
            <person name="Cheng C.Y."/>
            <person name="Krishnakumar V."/>
            <person name="Chan A.P."/>
            <person name="Thibaud-Nissen F."/>
            <person name="Schobel S."/>
            <person name="Town C.D."/>
        </authorList>
    </citation>
    <scope>GENOME REANNOTATION</scope>
    <source>
        <strain>cv. Columbia</strain>
    </source>
</reference>
<reference key="3">
    <citation type="journal article" date="2005" name="Plant Physiol.">
        <title>Genome organization of more than 300 defensin-like genes in Arabidopsis.</title>
        <authorList>
            <person name="Silverstein K.A.T."/>
            <person name="Graham M.A."/>
            <person name="Paape T.D."/>
            <person name="VandenBosch K.A."/>
        </authorList>
    </citation>
    <scope>GENE FAMILY</scope>
</reference>
<name>DF262_ARATH</name>
<proteinExistence type="inferred from homology"/>
<keyword id="KW-0929">Antimicrobial</keyword>
<keyword id="KW-1015">Disulfide bond</keyword>
<keyword id="KW-0295">Fungicide</keyword>
<keyword id="KW-0611">Plant defense</keyword>
<keyword id="KW-1185">Reference proteome</keyword>
<keyword id="KW-0964">Secreted</keyword>
<keyword id="KW-0732">Signal</keyword>
<gene>
    <name type="ordered locus">At1g68905</name>
    <name type="ORF">T6L1</name>
</gene>
<comment type="subcellular location">
    <subcellularLocation>
        <location evidence="1">Secreted</location>
    </subcellularLocation>
</comment>
<comment type="similarity">
    <text evidence="3">Belongs to the DEFL family.</text>
</comment>
<evidence type="ECO:0000250" key="1"/>
<evidence type="ECO:0000255" key="2"/>
<evidence type="ECO:0000305" key="3"/>
<sequence>MEKTSLKLIFLFSLTVIAFCSSLGDAREMVKAEVNCIGGKCPEGKKNCNCMPPIAHVMDDIRPCNTDGDCYKFCPRECELGTCYCRCDYGCTCTC</sequence>
<protein>
    <recommendedName>
        <fullName>Putative defensin-like protein 262</fullName>
    </recommendedName>
</protein>
<organism>
    <name type="scientific">Arabidopsis thaliana</name>
    <name type="common">Mouse-ear cress</name>
    <dbReference type="NCBI Taxonomy" id="3702"/>
    <lineage>
        <taxon>Eukaryota</taxon>
        <taxon>Viridiplantae</taxon>
        <taxon>Streptophyta</taxon>
        <taxon>Embryophyta</taxon>
        <taxon>Tracheophyta</taxon>
        <taxon>Spermatophyta</taxon>
        <taxon>Magnoliopsida</taxon>
        <taxon>eudicotyledons</taxon>
        <taxon>Gunneridae</taxon>
        <taxon>Pentapetalae</taxon>
        <taxon>rosids</taxon>
        <taxon>malvids</taxon>
        <taxon>Brassicales</taxon>
        <taxon>Brassicaceae</taxon>
        <taxon>Camelineae</taxon>
        <taxon>Arabidopsis</taxon>
    </lineage>
</organism>
<accession>Q2V4E0</accession>
<feature type="signal peptide" evidence="2">
    <location>
        <begin position="1"/>
        <end position="26"/>
    </location>
</feature>
<feature type="chain" id="PRO_0000379724" description="Putative defensin-like protein 262">
    <location>
        <begin position="27"/>
        <end position="95"/>
    </location>
</feature>
<feature type="disulfide bond" evidence="1">
    <location>
        <begin position="48"/>
        <end position="95"/>
    </location>
</feature>
<feature type="disulfide bond" evidence="1">
    <location>
        <begin position="64"/>
        <end position="83"/>
    </location>
</feature>
<feature type="disulfide bond" evidence="1">
    <location>
        <begin position="70"/>
        <end position="91"/>
    </location>
</feature>
<feature type="disulfide bond" evidence="1">
    <location>
        <begin position="74"/>
        <end position="93"/>
    </location>
</feature>